<organism>
    <name type="scientific">Buchnera aphidicola subsp. Schizaphis graminum (strain Sg)</name>
    <dbReference type="NCBI Taxonomy" id="198804"/>
    <lineage>
        <taxon>Bacteria</taxon>
        <taxon>Pseudomonadati</taxon>
        <taxon>Pseudomonadota</taxon>
        <taxon>Gammaproteobacteria</taxon>
        <taxon>Enterobacterales</taxon>
        <taxon>Erwiniaceae</taxon>
        <taxon>Buchnera</taxon>
    </lineage>
</organism>
<keyword id="KW-0067">ATP-binding</keyword>
<keyword id="KW-0963">Cytoplasm</keyword>
<keyword id="KW-0460">Magnesium</keyword>
<keyword id="KW-0479">Metal-binding</keyword>
<keyword id="KW-0547">Nucleotide-binding</keyword>
<keyword id="KW-0554">One-carbon metabolism</keyword>
<keyword id="KW-0630">Potassium</keyword>
<keyword id="KW-0808">Transferase</keyword>
<evidence type="ECO:0000255" key="1">
    <source>
        <dbReference type="HAMAP-Rule" id="MF_00086"/>
    </source>
</evidence>
<dbReference type="EC" id="2.5.1.6" evidence="1"/>
<dbReference type="EMBL" id="AE013218">
    <property type="protein sequence ID" value="AAM67945.1"/>
    <property type="molecule type" value="Genomic_DNA"/>
</dbReference>
<dbReference type="RefSeq" id="WP_011053912.1">
    <property type="nucleotide sequence ID" value="NC_004061.1"/>
</dbReference>
<dbReference type="SMR" id="Q8K9E5"/>
<dbReference type="STRING" id="198804.BUsg_393"/>
<dbReference type="GeneID" id="93003864"/>
<dbReference type="KEGG" id="bas:BUsg_393"/>
<dbReference type="eggNOG" id="COG0192">
    <property type="taxonomic scope" value="Bacteria"/>
</dbReference>
<dbReference type="HOGENOM" id="CLU_041802_1_1_6"/>
<dbReference type="UniPathway" id="UPA00315">
    <property type="reaction ID" value="UER00080"/>
</dbReference>
<dbReference type="Proteomes" id="UP000000416">
    <property type="component" value="Chromosome"/>
</dbReference>
<dbReference type="GO" id="GO:0005737">
    <property type="term" value="C:cytoplasm"/>
    <property type="evidence" value="ECO:0007669"/>
    <property type="project" value="UniProtKB-SubCell"/>
</dbReference>
<dbReference type="GO" id="GO:0005524">
    <property type="term" value="F:ATP binding"/>
    <property type="evidence" value="ECO:0007669"/>
    <property type="project" value="UniProtKB-UniRule"/>
</dbReference>
<dbReference type="GO" id="GO:0000287">
    <property type="term" value="F:magnesium ion binding"/>
    <property type="evidence" value="ECO:0007669"/>
    <property type="project" value="UniProtKB-UniRule"/>
</dbReference>
<dbReference type="GO" id="GO:0004478">
    <property type="term" value="F:methionine adenosyltransferase activity"/>
    <property type="evidence" value="ECO:0007669"/>
    <property type="project" value="UniProtKB-UniRule"/>
</dbReference>
<dbReference type="GO" id="GO:0006730">
    <property type="term" value="P:one-carbon metabolic process"/>
    <property type="evidence" value="ECO:0007669"/>
    <property type="project" value="UniProtKB-KW"/>
</dbReference>
<dbReference type="GO" id="GO:0006556">
    <property type="term" value="P:S-adenosylmethionine biosynthetic process"/>
    <property type="evidence" value="ECO:0007669"/>
    <property type="project" value="UniProtKB-UniRule"/>
</dbReference>
<dbReference type="CDD" id="cd18079">
    <property type="entry name" value="S-AdoMet_synt"/>
    <property type="match status" value="1"/>
</dbReference>
<dbReference type="FunFam" id="3.30.300.10:FF:000003">
    <property type="entry name" value="S-adenosylmethionine synthase"/>
    <property type="match status" value="1"/>
</dbReference>
<dbReference type="Gene3D" id="3.30.300.10">
    <property type="match status" value="3"/>
</dbReference>
<dbReference type="HAMAP" id="MF_00086">
    <property type="entry name" value="S_AdoMet_synth1"/>
    <property type="match status" value="1"/>
</dbReference>
<dbReference type="InterPro" id="IPR022631">
    <property type="entry name" value="ADOMET_SYNTHASE_CS"/>
</dbReference>
<dbReference type="InterPro" id="IPR022630">
    <property type="entry name" value="S-AdoMet_synt_C"/>
</dbReference>
<dbReference type="InterPro" id="IPR022629">
    <property type="entry name" value="S-AdoMet_synt_central"/>
</dbReference>
<dbReference type="InterPro" id="IPR022628">
    <property type="entry name" value="S-AdoMet_synt_N"/>
</dbReference>
<dbReference type="InterPro" id="IPR002133">
    <property type="entry name" value="S-AdoMet_synthetase"/>
</dbReference>
<dbReference type="InterPro" id="IPR022636">
    <property type="entry name" value="S-AdoMet_synthetase_sfam"/>
</dbReference>
<dbReference type="NCBIfam" id="TIGR01034">
    <property type="entry name" value="metK"/>
    <property type="match status" value="1"/>
</dbReference>
<dbReference type="PANTHER" id="PTHR11964">
    <property type="entry name" value="S-ADENOSYLMETHIONINE SYNTHETASE"/>
    <property type="match status" value="1"/>
</dbReference>
<dbReference type="Pfam" id="PF02773">
    <property type="entry name" value="S-AdoMet_synt_C"/>
    <property type="match status" value="1"/>
</dbReference>
<dbReference type="Pfam" id="PF02772">
    <property type="entry name" value="S-AdoMet_synt_M"/>
    <property type="match status" value="1"/>
</dbReference>
<dbReference type="Pfam" id="PF00438">
    <property type="entry name" value="S-AdoMet_synt_N"/>
    <property type="match status" value="1"/>
</dbReference>
<dbReference type="PIRSF" id="PIRSF000497">
    <property type="entry name" value="MAT"/>
    <property type="match status" value="1"/>
</dbReference>
<dbReference type="SUPFAM" id="SSF55973">
    <property type="entry name" value="S-adenosylmethionine synthetase"/>
    <property type="match status" value="3"/>
</dbReference>
<dbReference type="PROSITE" id="PS00376">
    <property type="entry name" value="ADOMET_SYNTHASE_1"/>
    <property type="match status" value="1"/>
</dbReference>
<dbReference type="PROSITE" id="PS00377">
    <property type="entry name" value="ADOMET_SYNTHASE_2"/>
    <property type="match status" value="1"/>
</dbReference>
<proteinExistence type="inferred from homology"/>
<protein>
    <recommendedName>
        <fullName evidence="1">S-adenosylmethionine synthase</fullName>
        <shortName evidence="1">AdoMet synthase</shortName>
        <ecNumber evidence="1">2.5.1.6</ecNumber>
    </recommendedName>
    <alternativeName>
        <fullName evidence="1">MAT</fullName>
    </alternativeName>
    <alternativeName>
        <fullName evidence="1">Methionine adenosyltransferase</fullName>
    </alternativeName>
</protein>
<sequence length="379" mass="42003">MTEYLFTSESVSEGHPDKIADQISDALLDEIIKQDLKARVACETYVKTGMVLIGGEITTTAWVDVEEITRNTINNIGYINSETGFDANSCAVLSTIGKQSPDITQGVDRCNPLEQGAGDQGIIFGYATNETEVLMPAPITYAHLLVKKQSELRKKNILHWLRPDAKSQVTFKYKNGRIIGIDTVVFSTQHKESITQDVLKEAVMEEIIKPVLPNKWLTKNTKFFINPTGRFVIGGPMGDCGLTGRKIIVDTYGGMSRHGGGAFSGKDPSKVDRSAAYAARYVAKNIVAAGLADRCEIQLSYAIGIAEPTSIMIETFRTGKISNKSLINLVRNIFDLRPYGLIEMLDLLRPIYLNTAVYGHFGREEFPWEKLDKVDELLQ</sequence>
<comment type="function">
    <text evidence="1">Catalyzes the formation of S-adenosylmethionine (AdoMet) from methionine and ATP. The overall synthetic reaction is composed of two sequential steps, AdoMet formation and the subsequent tripolyphosphate hydrolysis which occurs prior to release of AdoMet from the enzyme.</text>
</comment>
<comment type="catalytic activity">
    <reaction evidence="1">
        <text>L-methionine + ATP + H2O = S-adenosyl-L-methionine + phosphate + diphosphate</text>
        <dbReference type="Rhea" id="RHEA:21080"/>
        <dbReference type="ChEBI" id="CHEBI:15377"/>
        <dbReference type="ChEBI" id="CHEBI:30616"/>
        <dbReference type="ChEBI" id="CHEBI:33019"/>
        <dbReference type="ChEBI" id="CHEBI:43474"/>
        <dbReference type="ChEBI" id="CHEBI:57844"/>
        <dbReference type="ChEBI" id="CHEBI:59789"/>
        <dbReference type="EC" id="2.5.1.6"/>
    </reaction>
</comment>
<comment type="cofactor">
    <cofactor evidence="1">
        <name>Mg(2+)</name>
        <dbReference type="ChEBI" id="CHEBI:18420"/>
    </cofactor>
    <text evidence="1">Binds 2 divalent ions per subunit.</text>
</comment>
<comment type="cofactor">
    <cofactor evidence="1">
        <name>K(+)</name>
        <dbReference type="ChEBI" id="CHEBI:29103"/>
    </cofactor>
    <text evidence="1">Binds 1 potassium ion per subunit.</text>
</comment>
<comment type="pathway">
    <text evidence="1">Amino-acid biosynthesis; S-adenosyl-L-methionine biosynthesis; S-adenosyl-L-methionine from L-methionine: step 1/1.</text>
</comment>
<comment type="subunit">
    <text evidence="1">Homotetramer; dimer of dimers.</text>
</comment>
<comment type="subcellular location">
    <subcellularLocation>
        <location evidence="1">Cytoplasm</location>
    </subcellularLocation>
</comment>
<comment type="similarity">
    <text evidence="1">Belongs to the AdoMet synthase family.</text>
</comment>
<reference key="1">
    <citation type="journal article" date="2002" name="Science">
        <title>50 million years of genomic stasis in endosymbiotic bacteria.</title>
        <authorList>
            <person name="Tamas I."/>
            <person name="Klasson L."/>
            <person name="Canbaeck B."/>
            <person name="Naeslund A.K."/>
            <person name="Eriksson A.-S."/>
            <person name="Wernegreen J.J."/>
            <person name="Sandstroem J.P."/>
            <person name="Moran N.A."/>
            <person name="Andersson S.G.E."/>
        </authorList>
    </citation>
    <scope>NUCLEOTIDE SEQUENCE [LARGE SCALE GENOMIC DNA]</scope>
    <source>
        <strain>Sg</strain>
    </source>
</reference>
<accession>Q8K9E5</accession>
<feature type="chain" id="PRO_0000174503" description="S-adenosylmethionine synthase">
    <location>
        <begin position="1"/>
        <end position="379"/>
    </location>
</feature>
<feature type="region of interest" description="Flexible loop" evidence="1">
    <location>
        <begin position="99"/>
        <end position="109"/>
    </location>
</feature>
<feature type="binding site" description="in other chain" evidence="1">
    <location>
        <position position="15"/>
    </location>
    <ligand>
        <name>ATP</name>
        <dbReference type="ChEBI" id="CHEBI:30616"/>
        <note>ligand shared between two neighboring subunits</note>
    </ligand>
</feature>
<feature type="binding site" evidence="1">
    <location>
        <position position="17"/>
    </location>
    <ligand>
        <name>Mg(2+)</name>
        <dbReference type="ChEBI" id="CHEBI:18420"/>
    </ligand>
</feature>
<feature type="binding site" evidence="1">
    <location>
        <position position="43"/>
    </location>
    <ligand>
        <name>K(+)</name>
        <dbReference type="ChEBI" id="CHEBI:29103"/>
    </ligand>
</feature>
<feature type="binding site" description="in other chain" evidence="1">
    <location>
        <position position="56"/>
    </location>
    <ligand>
        <name>L-methionine</name>
        <dbReference type="ChEBI" id="CHEBI:57844"/>
        <note>ligand shared between two neighboring subunits</note>
    </ligand>
</feature>
<feature type="binding site" description="in other chain" evidence="1">
    <location>
        <position position="99"/>
    </location>
    <ligand>
        <name>L-methionine</name>
        <dbReference type="ChEBI" id="CHEBI:57844"/>
        <note>ligand shared between two neighboring subunits</note>
    </ligand>
</feature>
<feature type="binding site" description="in other chain" evidence="1">
    <location>
        <begin position="164"/>
        <end position="166"/>
    </location>
    <ligand>
        <name>ATP</name>
        <dbReference type="ChEBI" id="CHEBI:30616"/>
        <note>ligand shared between two neighboring subunits</note>
    </ligand>
</feature>
<feature type="binding site" description="in other chain" evidence="1">
    <location>
        <begin position="230"/>
        <end position="231"/>
    </location>
    <ligand>
        <name>ATP</name>
        <dbReference type="ChEBI" id="CHEBI:30616"/>
        <note>ligand shared between two neighboring subunits</note>
    </ligand>
</feature>
<feature type="binding site" evidence="1">
    <location>
        <position position="239"/>
    </location>
    <ligand>
        <name>ATP</name>
        <dbReference type="ChEBI" id="CHEBI:30616"/>
        <note>ligand shared between two neighboring subunits</note>
    </ligand>
</feature>
<feature type="binding site" evidence="1">
    <location>
        <position position="239"/>
    </location>
    <ligand>
        <name>L-methionine</name>
        <dbReference type="ChEBI" id="CHEBI:57844"/>
        <note>ligand shared between two neighboring subunits</note>
    </ligand>
</feature>
<feature type="binding site" description="in other chain" evidence="1">
    <location>
        <begin position="245"/>
        <end position="246"/>
    </location>
    <ligand>
        <name>ATP</name>
        <dbReference type="ChEBI" id="CHEBI:30616"/>
        <note>ligand shared between two neighboring subunits</note>
    </ligand>
</feature>
<feature type="binding site" evidence="1">
    <location>
        <position position="262"/>
    </location>
    <ligand>
        <name>ATP</name>
        <dbReference type="ChEBI" id="CHEBI:30616"/>
        <note>ligand shared between two neighboring subunits</note>
    </ligand>
</feature>
<feature type="binding site" evidence="1">
    <location>
        <position position="266"/>
    </location>
    <ligand>
        <name>ATP</name>
        <dbReference type="ChEBI" id="CHEBI:30616"/>
        <note>ligand shared between two neighboring subunits</note>
    </ligand>
</feature>
<feature type="binding site" description="in other chain" evidence="1">
    <location>
        <position position="270"/>
    </location>
    <ligand>
        <name>L-methionine</name>
        <dbReference type="ChEBI" id="CHEBI:57844"/>
        <note>ligand shared between two neighboring subunits</note>
    </ligand>
</feature>
<name>METK_BUCAP</name>
<gene>
    <name evidence="1" type="primary">metK</name>
    <name type="ordered locus">BUsg_393</name>
</gene>